<evidence type="ECO:0000255" key="1">
    <source>
        <dbReference type="HAMAP-Rule" id="MF_01137"/>
    </source>
</evidence>
<protein>
    <recommendedName>
        <fullName evidence="1">Acetyl-CoA decarbonylase/synthase complex subunit alpha 3</fullName>
        <shortName evidence="1">ACDS complex subunit alpha 3</shortName>
        <ecNumber evidence="1">1.2.7.4</ecNumber>
    </recommendedName>
    <alternativeName>
        <fullName evidence="1">ACDS complex carbon monoxide dehydrogenase subunit alpha 3</fullName>
        <shortName evidence="1">ACDS CODH subunit alpha 3</shortName>
    </alternativeName>
</protein>
<feature type="chain" id="PRO_0000155076" description="Acetyl-CoA decarbonylase/synthase complex subunit alpha 3">
    <location>
        <begin position="1"/>
        <end position="805"/>
    </location>
</feature>
<feature type="domain" description="4Fe-4S ferredoxin-type 1" evidence="1">
    <location>
        <begin position="407"/>
        <end position="435"/>
    </location>
</feature>
<feature type="domain" description="4Fe-4S ferredoxin-type 2" evidence="1">
    <location>
        <begin position="445"/>
        <end position="474"/>
    </location>
</feature>
<feature type="binding site" evidence="1">
    <location>
        <position position="72"/>
    </location>
    <ligand>
        <name>[4Fe-4S] cluster</name>
        <dbReference type="ChEBI" id="CHEBI:49883"/>
        <label>1</label>
        <note>ligand shared between dimeric partners</note>
    </ligand>
</feature>
<feature type="binding site" evidence="1">
    <location>
        <position position="75"/>
    </location>
    <ligand>
        <name>[4Fe-4S] cluster</name>
        <dbReference type="ChEBI" id="CHEBI:49883"/>
        <label>2</label>
    </ligand>
</feature>
<feature type="binding site" evidence="1">
    <location>
        <position position="76"/>
    </location>
    <ligand>
        <name>[4Fe-4S] cluster</name>
        <dbReference type="ChEBI" id="CHEBI:49883"/>
        <label>1</label>
        <note>ligand shared between dimeric partners</note>
    </ligand>
</feature>
<feature type="binding site" evidence="1">
    <location>
        <position position="78"/>
    </location>
    <ligand>
        <name>[4Fe-4S] cluster</name>
        <dbReference type="ChEBI" id="CHEBI:49883"/>
        <label>2</label>
    </ligand>
</feature>
<feature type="binding site" evidence="1">
    <location>
        <position position="83"/>
    </location>
    <ligand>
        <name>[4Fe-4S] cluster</name>
        <dbReference type="ChEBI" id="CHEBI:49883"/>
        <label>2</label>
    </ligand>
</feature>
<feature type="binding site" evidence="1">
    <location>
        <position position="93"/>
    </location>
    <ligand>
        <name>[4Fe-4S] cluster</name>
        <dbReference type="ChEBI" id="CHEBI:49883"/>
        <label>2</label>
    </ligand>
</feature>
<feature type="binding site" evidence="1">
    <location>
        <position position="116"/>
    </location>
    <ligand>
        <name>CO</name>
        <dbReference type="ChEBI" id="CHEBI:17245"/>
    </ligand>
</feature>
<feature type="binding site" evidence="1">
    <location>
        <position position="249"/>
    </location>
    <ligand>
        <name>[Ni-4Fe-4S] cluster</name>
        <dbReference type="ChEBI" id="CHEBI:47739"/>
    </ligand>
</feature>
<feature type="binding site" evidence="1">
    <location>
        <position position="277"/>
    </location>
    <ligand>
        <name>[Ni-4Fe-4S] cluster</name>
        <dbReference type="ChEBI" id="CHEBI:47739"/>
    </ligand>
</feature>
<feature type="binding site" evidence="1">
    <location>
        <position position="322"/>
    </location>
    <ligand>
        <name>[Ni-4Fe-4S] cluster</name>
        <dbReference type="ChEBI" id="CHEBI:47739"/>
    </ligand>
</feature>
<feature type="binding site" evidence="1">
    <location>
        <position position="416"/>
    </location>
    <ligand>
        <name>[4Fe-4S] cluster</name>
        <dbReference type="ChEBI" id="CHEBI:49883"/>
        <label>3</label>
    </ligand>
</feature>
<feature type="binding site" evidence="1">
    <location>
        <position position="419"/>
    </location>
    <ligand>
        <name>[4Fe-4S] cluster</name>
        <dbReference type="ChEBI" id="CHEBI:49883"/>
        <label>3</label>
    </ligand>
</feature>
<feature type="binding site" evidence="1">
    <location>
        <position position="422"/>
    </location>
    <ligand>
        <name>[4Fe-4S] cluster</name>
        <dbReference type="ChEBI" id="CHEBI:49883"/>
        <label>3</label>
    </ligand>
</feature>
<feature type="binding site" evidence="1">
    <location>
        <position position="426"/>
    </location>
    <ligand>
        <name>[4Fe-4S] cluster</name>
        <dbReference type="ChEBI" id="CHEBI:49883"/>
        <label>4</label>
    </ligand>
</feature>
<feature type="binding site" evidence="1">
    <location>
        <position position="454"/>
    </location>
    <ligand>
        <name>[4Fe-4S] cluster</name>
        <dbReference type="ChEBI" id="CHEBI:49883"/>
        <label>4</label>
    </ligand>
</feature>
<feature type="binding site" evidence="1">
    <location>
        <position position="457"/>
    </location>
    <ligand>
        <name>[4Fe-4S] cluster</name>
        <dbReference type="ChEBI" id="CHEBI:49883"/>
        <label>4</label>
    </ligand>
</feature>
<feature type="binding site" evidence="1">
    <location>
        <position position="460"/>
    </location>
    <ligand>
        <name>[4Fe-4S] cluster</name>
        <dbReference type="ChEBI" id="CHEBI:49883"/>
        <label>4</label>
    </ligand>
</feature>
<feature type="binding site" evidence="1">
    <location>
        <position position="464"/>
    </location>
    <ligand>
        <name>[4Fe-4S] cluster</name>
        <dbReference type="ChEBI" id="CHEBI:49883"/>
        <label>3</label>
    </ligand>
</feature>
<feature type="binding site" evidence="1">
    <location>
        <position position="522"/>
    </location>
    <ligand>
        <name>[Ni-4Fe-4S] cluster</name>
        <dbReference type="ChEBI" id="CHEBI:47739"/>
    </ligand>
</feature>
<feature type="binding site" evidence="1">
    <location>
        <position position="551"/>
    </location>
    <ligand>
        <name>[Ni-4Fe-4S] cluster</name>
        <dbReference type="ChEBI" id="CHEBI:47739"/>
    </ligand>
</feature>
<feature type="binding site" evidence="1">
    <location>
        <position position="586"/>
    </location>
    <ligand>
        <name>[Ni-4Fe-4S] cluster</name>
        <dbReference type="ChEBI" id="CHEBI:47739"/>
    </ligand>
</feature>
<gene>
    <name evidence="1" type="primary">cdhA3</name>
    <name type="ordered locus">MA_4399</name>
</gene>
<keyword id="KW-0004">4Fe-4S</keyword>
<keyword id="KW-0408">Iron</keyword>
<keyword id="KW-0411">Iron-sulfur</keyword>
<keyword id="KW-0479">Metal-binding</keyword>
<keyword id="KW-0484">Methanogenesis</keyword>
<keyword id="KW-0533">Nickel</keyword>
<keyword id="KW-0560">Oxidoreductase</keyword>
<keyword id="KW-1185">Reference proteome</keyword>
<keyword id="KW-0677">Repeat</keyword>
<proteinExistence type="inferred from homology"/>
<sequence length="805" mass="87993">MSKLTTGSFSIEDLESVQITINNIVGAAKEAAEEKAKELGPMGPTAMAGLASYRSWNLLLLDRYEPVLTPMCDQCCYCTYGPCDLSGNKRGACGIDMAGQTGREFFLRVITGTACHAAHGRHLLDHVIEVFGEDLPLNLGESNVLTPNVTICTGLSPKTLGECRAPMEYVEEQLTQLLATIHAGQESAEIDYDSKALFSGSLDHVGMEVSDIAQVSAYDFPKADPEAPLIEIGMGSIDKSKPLIVAIGHNVAGVTYIMDYMEENNLTDKMEIAGLCCTAFDMTRYKEADRRAPYAKIVGSLAKELKVIRSGMPDVIVVDEQCVRGDVLSESMKLKIPVIASNEKIMMGLPDRTDADVDSIVEEIKSGAIPGCVMLDYDKLGELIPKIAEVMAPIRDAEGITAIPTDEEFKVYIDKCVKCGECMLACPEELDIPEALEYAAKGSYEYLEALHDVCIGCRRCEQVCKKEIPILNVLEKAAQKSISEEKGWVRSGRGQASDAEIRAEGLNLVMGTTPGIIAIIGCPNYPAGTKDVYNIAEEFLKRNYLVVVSGCSAMDIGMYKDDDGKTLYERYPGTFSGGGLLNTGSCVSNAHITGAAEKVAGIFAQRTLAGNLAEVADYTLNRVGACGLAWGAYSQKAASIGTGCNIYGIPAVLGPHSSKYRRALIAKTYEEDKWKVFDARDGSEMNIPPAPEFLLTTAETWQEALPMMAKACIRPSDNNMGRSIKLTHWMELSKKYLGVEPEDWWKFVRNEADLPLAKREELLKRLEAEQGWEIDWKRKKIISGPKIKFDVSAQPTNLKRLCKEA</sequence>
<reference key="1">
    <citation type="journal article" date="2002" name="Genome Res.">
        <title>The genome of Methanosarcina acetivorans reveals extensive metabolic and physiological diversity.</title>
        <authorList>
            <person name="Galagan J.E."/>
            <person name="Nusbaum C."/>
            <person name="Roy A."/>
            <person name="Endrizzi M.G."/>
            <person name="Macdonald P."/>
            <person name="FitzHugh W."/>
            <person name="Calvo S."/>
            <person name="Engels R."/>
            <person name="Smirnov S."/>
            <person name="Atnoor D."/>
            <person name="Brown A."/>
            <person name="Allen N."/>
            <person name="Naylor J."/>
            <person name="Stange-Thomann N."/>
            <person name="DeArellano K."/>
            <person name="Johnson R."/>
            <person name="Linton L."/>
            <person name="McEwan P."/>
            <person name="McKernan K."/>
            <person name="Talamas J."/>
            <person name="Tirrell A."/>
            <person name="Ye W."/>
            <person name="Zimmer A."/>
            <person name="Barber R.D."/>
            <person name="Cann I."/>
            <person name="Graham D.E."/>
            <person name="Grahame D.A."/>
            <person name="Guss A.M."/>
            <person name="Hedderich R."/>
            <person name="Ingram-Smith C."/>
            <person name="Kuettner H.C."/>
            <person name="Krzycki J.A."/>
            <person name="Leigh J.A."/>
            <person name="Li W."/>
            <person name="Liu J."/>
            <person name="Mukhopadhyay B."/>
            <person name="Reeve J.N."/>
            <person name="Smith K."/>
            <person name="Springer T.A."/>
            <person name="Umayam L.A."/>
            <person name="White O."/>
            <person name="White R.H."/>
            <person name="de Macario E.C."/>
            <person name="Ferry J.G."/>
            <person name="Jarrell K.F."/>
            <person name="Jing H."/>
            <person name="Macario A.J.L."/>
            <person name="Paulsen I.T."/>
            <person name="Pritchett M."/>
            <person name="Sowers K.R."/>
            <person name="Swanson R.V."/>
            <person name="Zinder S.H."/>
            <person name="Lander E."/>
            <person name="Metcalf W.W."/>
            <person name="Birren B."/>
        </authorList>
    </citation>
    <scope>NUCLEOTIDE SEQUENCE [LARGE SCALE GENOMIC DNA]</scope>
    <source>
        <strain>ATCC 35395 / DSM 2834 / JCM 12185 / C2A</strain>
    </source>
</reference>
<organism>
    <name type="scientific">Methanosarcina acetivorans (strain ATCC 35395 / DSM 2834 / JCM 12185 / C2A)</name>
    <dbReference type="NCBI Taxonomy" id="188937"/>
    <lineage>
        <taxon>Archaea</taxon>
        <taxon>Methanobacteriati</taxon>
        <taxon>Methanobacteriota</taxon>
        <taxon>Stenosarchaea group</taxon>
        <taxon>Methanomicrobia</taxon>
        <taxon>Methanosarcinales</taxon>
        <taxon>Methanosarcinaceae</taxon>
        <taxon>Methanosarcina</taxon>
    </lineage>
</organism>
<comment type="function">
    <text evidence="1">Part of the ACDS complex that catalyzes the reversible cleavage of acetyl-CoA, allowing growth on acetate as sole source of carbon and energy. The alpha-epsilon subcomponent functions as a carbon monoxide dehydrogenase.</text>
</comment>
<comment type="catalytic activity">
    <reaction evidence="1">
        <text>CO + 2 oxidized [2Fe-2S]-[ferredoxin] + H2O = 2 reduced [2Fe-2S]-[ferredoxin] + CO2 + 2 H(+)</text>
        <dbReference type="Rhea" id="RHEA:21040"/>
        <dbReference type="Rhea" id="RHEA-COMP:10000"/>
        <dbReference type="Rhea" id="RHEA-COMP:10001"/>
        <dbReference type="ChEBI" id="CHEBI:15377"/>
        <dbReference type="ChEBI" id="CHEBI:15378"/>
        <dbReference type="ChEBI" id="CHEBI:16526"/>
        <dbReference type="ChEBI" id="CHEBI:17245"/>
        <dbReference type="ChEBI" id="CHEBI:33737"/>
        <dbReference type="ChEBI" id="CHEBI:33738"/>
        <dbReference type="EC" id="1.2.7.4"/>
    </reaction>
</comment>
<comment type="cofactor">
    <cofactor evidence="1">
        <name>[4Fe-4S] cluster</name>
        <dbReference type="ChEBI" id="CHEBI:49883"/>
    </cofactor>
    <text evidence="1">Binds 7 [4Fe-4S] clusters per heterotetramer.</text>
</comment>
<comment type="cofactor">
    <cofactor evidence="1">
        <name>[Ni-4Fe-4S] cluster</name>
        <dbReference type="ChEBI" id="CHEBI:47739"/>
    </cofactor>
    <text evidence="1">Binds 2 [Ni-4Fe-4S] clusters per heterotetramer.</text>
</comment>
<comment type="pathway">
    <text evidence="1">One-carbon metabolism; methanogenesis from acetate.</text>
</comment>
<comment type="subunit">
    <text evidence="1">Heterotetramer of two alpha and two epsilon subunits. The ACDS complex is made up of alpha, epsilon, beta, gamma and delta subunits with a probable stoichiometry of (alpha(2)epsilon(2))(4)-beta(8)-(gamma(1)delta(1))(8).</text>
</comment>
<comment type="domain">
    <text evidence="1">Cluster B is an all-cysteinyl-liganded 4Fe-4S cluster; cluster C is a mixed Ni-Fe-S cluster which is the active site of CO oxidation. Cluster D is also an all-cysteinyl-liganded 4Fe-4S cluster that bridges the two subunits of the CODH dimer. Contains two additional 4Fe-4S clusters, dubbed E and F, that probably transport electrons from ferredoxin to the B cluster.</text>
</comment>
<comment type="similarity">
    <text evidence="1">Belongs to the Ni-containing carbon monoxide dehydrogenase family.</text>
</comment>
<dbReference type="EC" id="1.2.7.4" evidence="1"/>
<dbReference type="EMBL" id="AE010299">
    <property type="protein sequence ID" value="AAM07741.1"/>
    <property type="molecule type" value="Genomic_DNA"/>
</dbReference>
<dbReference type="RefSeq" id="WP_011024278.1">
    <property type="nucleotide sequence ID" value="NC_003552.1"/>
</dbReference>
<dbReference type="SMR" id="Q8THW2"/>
<dbReference type="FunCoup" id="Q8THW2">
    <property type="interactions" value="70"/>
</dbReference>
<dbReference type="STRING" id="188937.MA_4399"/>
<dbReference type="EnsemblBacteria" id="AAM07741">
    <property type="protein sequence ID" value="AAM07741"/>
    <property type="gene ID" value="MA_4399"/>
</dbReference>
<dbReference type="GeneID" id="1476293"/>
<dbReference type="KEGG" id="mac:MA_4399"/>
<dbReference type="HOGENOM" id="CLU_361186_0_0_2"/>
<dbReference type="InParanoid" id="Q8THW2"/>
<dbReference type="OrthoDB" id="35334at2157"/>
<dbReference type="PhylomeDB" id="Q8THW2"/>
<dbReference type="UniPathway" id="UPA00642"/>
<dbReference type="Proteomes" id="UP000002487">
    <property type="component" value="Chromosome"/>
</dbReference>
<dbReference type="GO" id="GO:0051539">
    <property type="term" value="F:4 iron, 4 sulfur cluster binding"/>
    <property type="evidence" value="ECO:0007669"/>
    <property type="project" value="UniProtKB-KW"/>
</dbReference>
<dbReference type="GO" id="GO:0043885">
    <property type="term" value="F:anaerobic carbon-monoxide dehydrogenase activity"/>
    <property type="evidence" value="ECO:0007669"/>
    <property type="project" value="UniProtKB-UniRule"/>
</dbReference>
<dbReference type="GO" id="GO:0050418">
    <property type="term" value="F:hydroxylamine reductase activity"/>
    <property type="evidence" value="ECO:0000318"/>
    <property type="project" value="GO_Central"/>
</dbReference>
<dbReference type="GO" id="GO:0005506">
    <property type="term" value="F:iron ion binding"/>
    <property type="evidence" value="ECO:0007669"/>
    <property type="project" value="UniProtKB-UniRule"/>
</dbReference>
<dbReference type="GO" id="GO:0016151">
    <property type="term" value="F:nickel cation binding"/>
    <property type="evidence" value="ECO:0007669"/>
    <property type="project" value="UniProtKB-UniRule"/>
</dbReference>
<dbReference type="GO" id="GO:0004601">
    <property type="term" value="F:peroxidase activity"/>
    <property type="evidence" value="ECO:0000318"/>
    <property type="project" value="GO_Central"/>
</dbReference>
<dbReference type="GO" id="GO:0006084">
    <property type="term" value="P:acetyl-CoA metabolic process"/>
    <property type="evidence" value="ECO:0007669"/>
    <property type="project" value="InterPro"/>
</dbReference>
<dbReference type="GO" id="GO:0019385">
    <property type="term" value="P:methanogenesis, from acetate"/>
    <property type="evidence" value="ECO:0007669"/>
    <property type="project" value="UniProtKB-UniRule"/>
</dbReference>
<dbReference type="GO" id="GO:0046210">
    <property type="term" value="P:nitric oxide catabolic process"/>
    <property type="evidence" value="ECO:0000318"/>
    <property type="project" value="GO_Central"/>
</dbReference>
<dbReference type="GO" id="GO:0042542">
    <property type="term" value="P:response to hydrogen peroxide"/>
    <property type="evidence" value="ECO:0000318"/>
    <property type="project" value="GO_Central"/>
</dbReference>
<dbReference type="FunFam" id="1.10.8.190:FF:000001">
    <property type="entry name" value="Acetyl-CoA decarbonylase/synthase complex subunit alpha 1"/>
    <property type="match status" value="1"/>
</dbReference>
<dbReference type="FunFam" id="3.40.50.2030:FF:000004">
    <property type="entry name" value="Acetyl-CoA decarbonylase/synthase complex subunit alpha 1"/>
    <property type="match status" value="1"/>
</dbReference>
<dbReference type="FunFam" id="3.40.50.2030:FF:000006">
    <property type="entry name" value="Acetyl-CoA decarbonylase/synthase complex subunit alpha 1"/>
    <property type="match status" value="1"/>
</dbReference>
<dbReference type="Gene3D" id="3.30.70.20">
    <property type="match status" value="1"/>
</dbReference>
<dbReference type="Gene3D" id="3.40.50.2030">
    <property type="match status" value="2"/>
</dbReference>
<dbReference type="Gene3D" id="1.10.8.190">
    <property type="entry name" value="Carbon monoxide dehydrogenase alpha subunit. Chain M, domain 1"/>
    <property type="match status" value="1"/>
</dbReference>
<dbReference type="HAMAP" id="MF_01137">
    <property type="entry name" value="CdhA"/>
    <property type="match status" value="1"/>
</dbReference>
<dbReference type="InterPro" id="IPR017896">
    <property type="entry name" value="4Fe4S_Fe-S-bd"/>
</dbReference>
<dbReference type="InterPro" id="IPR017900">
    <property type="entry name" value="4Fe4S_Fe_S_CS"/>
</dbReference>
<dbReference type="InterPro" id="IPR004460">
    <property type="entry name" value="CdhA"/>
</dbReference>
<dbReference type="InterPro" id="IPR004137">
    <property type="entry name" value="HCP/CODH"/>
</dbReference>
<dbReference type="InterPro" id="IPR016099">
    <property type="entry name" value="Prismane-like_a/b-sand"/>
</dbReference>
<dbReference type="InterPro" id="IPR011254">
    <property type="entry name" value="Prismane-like_sf"/>
</dbReference>
<dbReference type="NCBIfam" id="TIGR00314">
    <property type="entry name" value="cdhA"/>
    <property type="match status" value="1"/>
</dbReference>
<dbReference type="PANTHER" id="PTHR30109:SF6">
    <property type="entry name" value="ACETYL-COA DECARBONYLASE_SYNTHASE COMPLEX SUBUNIT ALPHA"/>
    <property type="match status" value="1"/>
</dbReference>
<dbReference type="PANTHER" id="PTHR30109">
    <property type="entry name" value="HYDROXYLAMINE REDUCTASE"/>
    <property type="match status" value="1"/>
</dbReference>
<dbReference type="Pfam" id="PF13187">
    <property type="entry name" value="Fer4_9"/>
    <property type="match status" value="1"/>
</dbReference>
<dbReference type="Pfam" id="PF03063">
    <property type="entry name" value="Prismane"/>
    <property type="match status" value="2"/>
</dbReference>
<dbReference type="SUPFAM" id="SSF46548">
    <property type="entry name" value="alpha-helical ferredoxin"/>
    <property type="match status" value="1"/>
</dbReference>
<dbReference type="SUPFAM" id="SSF56821">
    <property type="entry name" value="Prismane protein-like"/>
    <property type="match status" value="1"/>
</dbReference>
<dbReference type="PROSITE" id="PS00198">
    <property type="entry name" value="4FE4S_FER_1"/>
    <property type="match status" value="1"/>
</dbReference>
<dbReference type="PROSITE" id="PS51379">
    <property type="entry name" value="4FE4S_FER_2"/>
    <property type="match status" value="2"/>
</dbReference>
<name>ACDA3_METAC</name>
<accession>Q8THW2</accession>